<accession>C3L983</accession>
<organism>
    <name type="scientific">Bacillus anthracis (strain CDC 684 / NRRL 3495)</name>
    <dbReference type="NCBI Taxonomy" id="568206"/>
    <lineage>
        <taxon>Bacteria</taxon>
        <taxon>Bacillati</taxon>
        <taxon>Bacillota</taxon>
        <taxon>Bacilli</taxon>
        <taxon>Bacillales</taxon>
        <taxon>Bacillaceae</taxon>
        <taxon>Bacillus</taxon>
        <taxon>Bacillus cereus group</taxon>
    </lineage>
</organism>
<comment type="function">
    <text evidence="1">Catalyzes the conversion of urocanate to 4-imidazolone-5-propionate.</text>
</comment>
<comment type="catalytic activity">
    <reaction evidence="1">
        <text>4-imidazolone-5-propanoate = trans-urocanate + H2O</text>
        <dbReference type="Rhea" id="RHEA:13101"/>
        <dbReference type="ChEBI" id="CHEBI:15377"/>
        <dbReference type="ChEBI" id="CHEBI:17771"/>
        <dbReference type="ChEBI" id="CHEBI:77893"/>
        <dbReference type="EC" id="4.2.1.49"/>
    </reaction>
</comment>
<comment type="cofactor">
    <cofactor evidence="1">
        <name>NAD(+)</name>
        <dbReference type="ChEBI" id="CHEBI:57540"/>
    </cofactor>
    <text evidence="1">Binds 1 NAD(+) per subunit.</text>
</comment>
<comment type="pathway">
    <text evidence="1">Amino-acid degradation; L-histidine degradation into L-glutamate; N-formimidoyl-L-glutamate from L-histidine: step 2/3.</text>
</comment>
<comment type="subcellular location">
    <subcellularLocation>
        <location evidence="1">Cytoplasm</location>
    </subcellularLocation>
</comment>
<comment type="similarity">
    <text evidence="1">Belongs to the urocanase family.</text>
</comment>
<feature type="chain" id="PRO_1000199895" description="Urocanate hydratase">
    <location>
        <begin position="1"/>
        <end position="552"/>
    </location>
</feature>
<feature type="active site" evidence="1">
    <location>
        <position position="407"/>
    </location>
</feature>
<feature type="binding site" evidence="1">
    <location>
        <begin position="49"/>
        <end position="50"/>
    </location>
    <ligand>
        <name>NAD(+)</name>
        <dbReference type="ChEBI" id="CHEBI:57540"/>
    </ligand>
</feature>
<feature type="binding site" evidence="1">
    <location>
        <position position="127"/>
    </location>
    <ligand>
        <name>NAD(+)</name>
        <dbReference type="ChEBI" id="CHEBI:57540"/>
    </ligand>
</feature>
<feature type="binding site" evidence="1">
    <location>
        <begin position="173"/>
        <end position="175"/>
    </location>
    <ligand>
        <name>NAD(+)</name>
        <dbReference type="ChEBI" id="CHEBI:57540"/>
    </ligand>
</feature>
<feature type="binding site" evidence="1">
    <location>
        <position position="193"/>
    </location>
    <ligand>
        <name>NAD(+)</name>
        <dbReference type="ChEBI" id="CHEBI:57540"/>
    </ligand>
</feature>
<feature type="binding site" evidence="1">
    <location>
        <begin position="239"/>
        <end position="240"/>
    </location>
    <ligand>
        <name>NAD(+)</name>
        <dbReference type="ChEBI" id="CHEBI:57540"/>
    </ligand>
</feature>
<feature type="binding site" evidence="1">
    <location>
        <begin position="260"/>
        <end position="264"/>
    </location>
    <ligand>
        <name>NAD(+)</name>
        <dbReference type="ChEBI" id="CHEBI:57540"/>
    </ligand>
</feature>
<feature type="binding site" evidence="1">
    <location>
        <begin position="270"/>
        <end position="271"/>
    </location>
    <ligand>
        <name>NAD(+)</name>
        <dbReference type="ChEBI" id="CHEBI:57540"/>
    </ligand>
</feature>
<feature type="binding site" evidence="1">
    <location>
        <position position="319"/>
    </location>
    <ligand>
        <name>NAD(+)</name>
        <dbReference type="ChEBI" id="CHEBI:57540"/>
    </ligand>
</feature>
<feature type="binding site" evidence="1">
    <location>
        <position position="489"/>
    </location>
    <ligand>
        <name>NAD(+)</name>
        <dbReference type="ChEBI" id="CHEBI:57540"/>
    </ligand>
</feature>
<proteinExistence type="inferred from homology"/>
<gene>
    <name evidence="1" type="primary">hutU</name>
    <name type="ordered locus">BAMEG_0923</name>
</gene>
<evidence type="ECO:0000255" key="1">
    <source>
        <dbReference type="HAMAP-Rule" id="MF_00577"/>
    </source>
</evidence>
<keyword id="KW-0963">Cytoplasm</keyword>
<keyword id="KW-0369">Histidine metabolism</keyword>
<keyword id="KW-0456">Lyase</keyword>
<keyword id="KW-0520">NAD</keyword>
<dbReference type="EC" id="4.2.1.49" evidence="1"/>
<dbReference type="EMBL" id="CP001215">
    <property type="protein sequence ID" value="ACP12782.1"/>
    <property type="molecule type" value="Genomic_DNA"/>
</dbReference>
<dbReference type="RefSeq" id="WP_000416715.1">
    <property type="nucleotide sequence ID" value="NC_012581.1"/>
</dbReference>
<dbReference type="SMR" id="C3L983"/>
<dbReference type="GeneID" id="45023432"/>
<dbReference type="KEGG" id="bah:BAMEG_0923"/>
<dbReference type="HOGENOM" id="CLU_018868_0_1_9"/>
<dbReference type="UniPathway" id="UPA00379">
    <property type="reaction ID" value="UER00550"/>
</dbReference>
<dbReference type="GO" id="GO:0005737">
    <property type="term" value="C:cytoplasm"/>
    <property type="evidence" value="ECO:0007669"/>
    <property type="project" value="UniProtKB-SubCell"/>
</dbReference>
<dbReference type="GO" id="GO:0016153">
    <property type="term" value="F:urocanate hydratase activity"/>
    <property type="evidence" value="ECO:0007669"/>
    <property type="project" value="UniProtKB-UniRule"/>
</dbReference>
<dbReference type="GO" id="GO:0019556">
    <property type="term" value="P:L-histidine catabolic process to glutamate and formamide"/>
    <property type="evidence" value="ECO:0007669"/>
    <property type="project" value="UniProtKB-UniPathway"/>
</dbReference>
<dbReference type="GO" id="GO:0019557">
    <property type="term" value="P:L-histidine catabolic process to glutamate and formate"/>
    <property type="evidence" value="ECO:0007669"/>
    <property type="project" value="UniProtKB-UniPathway"/>
</dbReference>
<dbReference type="FunFam" id="3.40.50.10730:FF:000001">
    <property type="entry name" value="Urocanate hydratase"/>
    <property type="match status" value="1"/>
</dbReference>
<dbReference type="Gene3D" id="3.40.50.10730">
    <property type="entry name" value="Urocanase like domains"/>
    <property type="match status" value="1"/>
</dbReference>
<dbReference type="Gene3D" id="3.40.1770.10">
    <property type="entry name" value="Urocanase superfamily"/>
    <property type="match status" value="1"/>
</dbReference>
<dbReference type="HAMAP" id="MF_00577">
    <property type="entry name" value="HutU"/>
    <property type="match status" value="1"/>
</dbReference>
<dbReference type="InterPro" id="IPR055351">
    <property type="entry name" value="Urocanase"/>
</dbReference>
<dbReference type="InterPro" id="IPR023637">
    <property type="entry name" value="Urocanase-like"/>
</dbReference>
<dbReference type="InterPro" id="IPR035401">
    <property type="entry name" value="Urocanase_C"/>
</dbReference>
<dbReference type="InterPro" id="IPR038364">
    <property type="entry name" value="Urocanase_central_sf"/>
</dbReference>
<dbReference type="InterPro" id="IPR023636">
    <property type="entry name" value="Urocanase_CS"/>
</dbReference>
<dbReference type="InterPro" id="IPR035400">
    <property type="entry name" value="Urocanase_N"/>
</dbReference>
<dbReference type="InterPro" id="IPR035085">
    <property type="entry name" value="Urocanase_Rossmann-like"/>
</dbReference>
<dbReference type="InterPro" id="IPR036190">
    <property type="entry name" value="Urocanase_sf"/>
</dbReference>
<dbReference type="NCBIfam" id="TIGR01228">
    <property type="entry name" value="hutU"/>
    <property type="match status" value="1"/>
</dbReference>
<dbReference type="NCBIfam" id="NF003820">
    <property type="entry name" value="PRK05414.1"/>
    <property type="match status" value="1"/>
</dbReference>
<dbReference type="PANTHER" id="PTHR12216">
    <property type="entry name" value="UROCANATE HYDRATASE"/>
    <property type="match status" value="1"/>
</dbReference>
<dbReference type="PANTHER" id="PTHR12216:SF4">
    <property type="entry name" value="UROCANATE HYDRATASE"/>
    <property type="match status" value="1"/>
</dbReference>
<dbReference type="Pfam" id="PF01175">
    <property type="entry name" value="Urocanase"/>
    <property type="match status" value="1"/>
</dbReference>
<dbReference type="Pfam" id="PF17392">
    <property type="entry name" value="Urocanase_C"/>
    <property type="match status" value="1"/>
</dbReference>
<dbReference type="Pfam" id="PF17391">
    <property type="entry name" value="Urocanase_N"/>
    <property type="match status" value="1"/>
</dbReference>
<dbReference type="PIRSF" id="PIRSF001423">
    <property type="entry name" value="Urocanate_hydrat"/>
    <property type="match status" value="1"/>
</dbReference>
<dbReference type="SUPFAM" id="SSF111326">
    <property type="entry name" value="Urocanase"/>
    <property type="match status" value="1"/>
</dbReference>
<dbReference type="PROSITE" id="PS01233">
    <property type="entry name" value="UROCANASE"/>
    <property type="match status" value="1"/>
</dbReference>
<protein>
    <recommendedName>
        <fullName evidence="1">Urocanate hydratase</fullName>
        <shortName evidence="1">Urocanase</shortName>
        <ecNumber evidence="1">4.2.1.49</ecNumber>
    </recommendedName>
    <alternativeName>
        <fullName evidence="1">Imidazolonepropionate hydrolase</fullName>
    </alternativeName>
</protein>
<name>HUTU_BACAC</name>
<sequence>MEKVKQTIRAPRGTELQTKGWVQEAALRMLMNNLDPEVAEKPEELVVYGGIGRAARNWESYQAIVDSLKTLESDETLLVQSGKPVAIFKSHEDAPRVLLANSNLVPKWANWDHFRELEKKGLMMYGQMTAGSWIYIGTQGILQGTYETFGEAARQHFGGSLKGTLTLTAGLGGMGGAQPLAVTMNGGVVIAIDVDKRSIDRRIEKRYCDMYTESLEEALAVANEYKEKKEPISIGLLGNAAEILPELVKRNITPDLVTDQTSAHDPLNGYIPVGYTLEEAAKLREEDPERYVQLSKESMTKHVEAMLAMQEKGAITFDYGNNIRQVAFDEGLKNAFDFPGFVPAFIRPLFCEGKGPFRWVALSGDPEDIYKTDEVILREFADNEHLCNWIRMARQQVEFQGLPSRICWLGYGERAKFGRIINEMVANGELSAPIVIGRDHLDCGSVASPNRETEAMKDGSDSVADWPILNALINSVNGASWVSVHHGGGVGMGYSLHAGMVIVADGTEAAAKRIERVLTSDPGMGVVRHVDAGYDLAVETAKEKGVNIPMMK</sequence>
<reference key="1">
    <citation type="submission" date="2008-10" db="EMBL/GenBank/DDBJ databases">
        <title>Genome sequence of Bacillus anthracis str. CDC 684.</title>
        <authorList>
            <person name="Dodson R.J."/>
            <person name="Munk A.C."/>
            <person name="Brettin T."/>
            <person name="Bruce D."/>
            <person name="Detter C."/>
            <person name="Tapia R."/>
            <person name="Han C."/>
            <person name="Sutton G."/>
            <person name="Sims D."/>
        </authorList>
    </citation>
    <scope>NUCLEOTIDE SEQUENCE [LARGE SCALE GENOMIC DNA]</scope>
    <source>
        <strain>CDC 684 / NRRL 3495</strain>
    </source>
</reference>